<evidence type="ECO:0000255" key="1">
    <source>
        <dbReference type="PROSITE-ProRule" id="PRU01182"/>
    </source>
</evidence>
<name>Y209_ATV</name>
<organismHost>
    <name type="scientific">Acidianus convivator</name>
    <dbReference type="NCBI Taxonomy" id="269667"/>
</organismHost>
<protein>
    <recommendedName>
        <fullName>Uncharacterized protein ORF209</fullName>
    </recommendedName>
</protein>
<proteinExistence type="predicted"/>
<organism>
    <name type="scientific">Acidianus two-tailed virus</name>
    <name type="common">ATV</name>
    <dbReference type="NCBI Taxonomy" id="315953"/>
    <lineage>
        <taxon>Viruses</taxon>
        <taxon>Viruses incertae sedis</taxon>
        <taxon>Bicaudaviridae</taxon>
        <taxon>Bicaudavirus</taxon>
    </lineage>
</organism>
<reference key="1">
    <citation type="journal article" date="2005" name="Nature">
        <title>Virology: independent virus development outside a host.</title>
        <authorList>
            <person name="Haring M."/>
            <person name="Vestergaard G."/>
            <person name="Rachel R."/>
            <person name="Chen L."/>
            <person name="Garrett R.A."/>
            <person name="Prangishvili D."/>
        </authorList>
    </citation>
    <scope>NUCLEOTIDE SEQUENCE [GENOMIC DNA]</scope>
</reference>
<keyword id="KW-0378">Hydrolase</keyword>
<keyword id="KW-0479">Metal-binding</keyword>
<keyword id="KW-0482">Metalloprotease</keyword>
<keyword id="KW-0645">Protease</keyword>
<keyword id="KW-1185">Reference proteome</keyword>
<keyword id="KW-0862">Zinc</keyword>
<accession>Q3V4T0</accession>
<sequence length="209" mass="23996">MEILPKYKPEEILAIIHTHPKGPAEPSINDLLMARHVLTNNKNTIHGVLAENDGKLQLIMYNYWTIDGSKLAKMLSRFLDNGVKPPREEKLKVAHAYVTNIEDFDVSKIPEIADHFALWRYYWLIDTSDLFVFDPSNIDIYKKLKEKALFIPTGRDEGWLVLGVDTSGAEPIVYKVKECKDKVTLRSTGHEFSPIIVEWCKEKPMCRVA</sequence>
<dbReference type="EMBL" id="AJ888457">
    <property type="protein sequence ID" value="CAI59884.1"/>
    <property type="molecule type" value="Genomic_DNA"/>
</dbReference>
<dbReference type="RefSeq" id="YP_319840.1">
    <property type="nucleotide sequence ID" value="NC_007409.1"/>
</dbReference>
<dbReference type="GeneID" id="4484286"/>
<dbReference type="KEGG" id="vg:4484286"/>
<dbReference type="OrthoDB" id="33951at10239"/>
<dbReference type="Proteomes" id="UP000002150">
    <property type="component" value="Genome"/>
</dbReference>
<dbReference type="GO" id="GO:0046872">
    <property type="term" value="F:metal ion binding"/>
    <property type="evidence" value="ECO:0007669"/>
    <property type="project" value="UniProtKB-KW"/>
</dbReference>
<dbReference type="GO" id="GO:0008237">
    <property type="term" value="F:metallopeptidase activity"/>
    <property type="evidence" value="ECO:0007669"/>
    <property type="project" value="UniProtKB-KW"/>
</dbReference>
<dbReference type="GO" id="GO:0006508">
    <property type="term" value="P:proteolysis"/>
    <property type="evidence" value="ECO:0007669"/>
    <property type="project" value="UniProtKB-KW"/>
</dbReference>
<dbReference type="InterPro" id="IPR028090">
    <property type="entry name" value="JAB_dom_prok"/>
</dbReference>
<dbReference type="InterPro" id="IPR037518">
    <property type="entry name" value="MPN"/>
</dbReference>
<dbReference type="Pfam" id="PF14464">
    <property type="entry name" value="Prok-JAB"/>
    <property type="match status" value="1"/>
</dbReference>
<dbReference type="SUPFAM" id="SSF102712">
    <property type="entry name" value="JAB1/MPN domain"/>
    <property type="match status" value="1"/>
</dbReference>
<dbReference type="PROSITE" id="PS50249">
    <property type="entry name" value="MPN"/>
    <property type="match status" value="1"/>
</dbReference>
<feature type="chain" id="PRO_0000389066" description="Uncharacterized protein ORF209">
    <location>
        <begin position="1"/>
        <end position="209"/>
    </location>
</feature>
<feature type="domain" description="MPN" evidence="1">
    <location>
        <begin position="1"/>
        <end position="67"/>
    </location>
</feature>
<feature type="short sequence motif" description="JAMM motif" evidence="1">
    <location>
        <begin position="17"/>
        <end position="30"/>
    </location>
</feature>
<feature type="binding site" evidence="1">
    <location>
        <position position="17"/>
    </location>
    <ligand>
        <name>Zn(2+)</name>
        <dbReference type="ChEBI" id="CHEBI:29105"/>
        <note>catalytic</note>
    </ligand>
</feature>
<feature type="binding site" evidence="1">
    <location>
        <position position="19"/>
    </location>
    <ligand>
        <name>Zn(2+)</name>
        <dbReference type="ChEBI" id="CHEBI:29105"/>
        <note>catalytic</note>
    </ligand>
</feature>
<feature type="binding site" evidence="1">
    <location>
        <position position="30"/>
    </location>
    <ligand>
        <name>Zn(2+)</name>
        <dbReference type="ChEBI" id="CHEBI:29105"/>
        <note>catalytic</note>
    </ligand>
</feature>